<dbReference type="EC" id="3.6.5.n1" evidence="1"/>
<dbReference type="EMBL" id="BX571856">
    <property type="protein sequence ID" value="CAG40656.1"/>
    <property type="molecule type" value="Genomic_DNA"/>
</dbReference>
<dbReference type="RefSeq" id="WP_000368338.1">
    <property type="nucleotide sequence ID" value="NC_002952.2"/>
</dbReference>
<dbReference type="SMR" id="Q6GGB6"/>
<dbReference type="KEGG" id="sar:SAR1662"/>
<dbReference type="HOGENOM" id="CLU_009995_3_3_9"/>
<dbReference type="Proteomes" id="UP000000596">
    <property type="component" value="Chromosome"/>
</dbReference>
<dbReference type="GO" id="GO:0005886">
    <property type="term" value="C:plasma membrane"/>
    <property type="evidence" value="ECO:0007669"/>
    <property type="project" value="UniProtKB-SubCell"/>
</dbReference>
<dbReference type="GO" id="GO:0005525">
    <property type="term" value="F:GTP binding"/>
    <property type="evidence" value="ECO:0007669"/>
    <property type="project" value="UniProtKB-UniRule"/>
</dbReference>
<dbReference type="GO" id="GO:0003924">
    <property type="term" value="F:GTPase activity"/>
    <property type="evidence" value="ECO:0007669"/>
    <property type="project" value="UniProtKB-UniRule"/>
</dbReference>
<dbReference type="GO" id="GO:0043022">
    <property type="term" value="F:ribosome binding"/>
    <property type="evidence" value="ECO:0007669"/>
    <property type="project" value="UniProtKB-UniRule"/>
</dbReference>
<dbReference type="GO" id="GO:0003746">
    <property type="term" value="F:translation elongation factor activity"/>
    <property type="evidence" value="ECO:0007669"/>
    <property type="project" value="UniProtKB-UniRule"/>
</dbReference>
<dbReference type="GO" id="GO:0045727">
    <property type="term" value="P:positive regulation of translation"/>
    <property type="evidence" value="ECO:0007669"/>
    <property type="project" value="UniProtKB-UniRule"/>
</dbReference>
<dbReference type="CDD" id="cd03699">
    <property type="entry name" value="EF4_II"/>
    <property type="match status" value="1"/>
</dbReference>
<dbReference type="CDD" id="cd16260">
    <property type="entry name" value="EF4_III"/>
    <property type="match status" value="1"/>
</dbReference>
<dbReference type="CDD" id="cd01890">
    <property type="entry name" value="LepA"/>
    <property type="match status" value="1"/>
</dbReference>
<dbReference type="CDD" id="cd03709">
    <property type="entry name" value="lepA_C"/>
    <property type="match status" value="1"/>
</dbReference>
<dbReference type="FunFam" id="3.40.50.300:FF:000078">
    <property type="entry name" value="Elongation factor 4"/>
    <property type="match status" value="1"/>
</dbReference>
<dbReference type="FunFam" id="2.40.30.10:FF:000015">
    <property type="entry name" value="Translation factor GUF1, mitochondrial"/>
    <property type="match status" value="1"/>
</dbReference>
<dbReference type="FunFam" id="3.30.70.240:FF:000007">
    <property type="entry name" value="Translation factor GUF1, mitochondrial"/>
    <property type="match status" value="1"/>
</dbReference>
<dbReference type="FunFam" id="3.30.70.2570:FF:000001">
    <property type="entry name" value="Translation factor GUF1, mitochondrial"/>
    <property type="match status" value="1"/>
</dbReference>
<dbReference type="FunFam" id="3.30.70.870:FF:000004">
    <property type="entry name" value="Translation factor GUF1, mitochondrial"/>
    <property type="match status" value="1"/>
</dbReference>
<dbReference type="Gene3D" id="3.30.70.240">
    <property type="match status" value="1"/>
</dbReference>
<dbReference type="Gene3D" id="3.30.70.2570">
    <property type="entry name" value="Elongation factor 4, C-terminal domain"/>
    <property type="match status" value="1"/>
</dbReference>
<dbReference type="Gene3D" id="3.30.70.870">
    <property type="entry name" value="Elongation Factor G (Translational Gtpase), domain 3"/>
    <property type="match status" value="1"/>
</dbReference>
<dbReference type="Gene3D" id="3.40.50.300">
    <property type="entry name" value="P-loop containing nucleotide triphosphate hydrolases"/>
    <property type="match status" value="1"/>
</dbReference>
<dbReference type="Gene3D" id="2.40.30.10">
    <property type="entry name" value="Translation factors"/>
    <property type="match status" value="1"/>
</dbReference>
<dbReference type="HAMAP" id="MF_00071">
    <property type="entry name" value="LepA"/>
    <property type="match status" value="1"/>
</dbReference>
<dbReference type="InterPro" id="IPR006297">
    <property type="entry name" value="EF-4"/>
</dbReference>
<dbReference type="InterPro" id="IPR035647">
    <property type="entry name" value="EFG_III/V"/>
</dbReference>
<dbReference type="InterPro" id="IPR000640">
    <property type="entry name" value="EFG_V-like"/>
</dbReference>
<dbReference type="InterPro" id="IPR004161">
    <property type="entry name" value="EFTu-like_2"/>
</dbReference>
<dbReference type="InterPro" id="IPR031157">
    <property type="entry name" value="G_TR_CS"/>
</dbReference>
<dbReference type="InterPro" id="IPR038363">
    <property type="entry name" value="LepA_C_sf"/>
</dbReference>
<dbReference type="InterPro" id="IPR013842">
    <property type="entry name" value="LepA_CTD"/>
</dbReference>
<dbReference type="InterPro" id="IPR035654">
    <property type="entry name" value="LepA_IV"/>
</dbReference>
<dbReference type="InterPro" id="IPR027417">
    <property type="entry name" value="P-loop_NTPase"/>
</dbReference>
<dbReference type="InterPro" id="IPR005225">
    <property type="entry name" value="Small_GTP-bd"/>
</dbReference>
<dbReference type="InterPro" id="IPR000795">
    <property type="entry name" value="T_Tr_GTP-bd_dom"/>
</dbReference>
<dbReference type="InterPro" id="IPR009000">
    <property type="entry name" value="Transl_B-barrel_sf"/>
</dbReference>
<dbReference type="NCBIfam" id="TIGR01393">
    <property type="entry name" value="lepA"/>
    <property type="match status" value="1"/>
</dbReference>
<dbReference type="NCBIfam" id="TIGR00231">
    <property type="entry name" value="small_GTP"/>
    <property type="match status" value="1"/>
</dbReference>
<dbReference type="PANTHER" id="PTHR43512:SF4">
    <property type="entry name" value="TRANSLATION FACTOR GUF1 HOMOLOG, CHLOROPLASTIC"/>
    <property type="match status" value="1"/>
</dbReference>
<dbReference type="PANTHER" id="PTHR43512">
    <property type="entry name" value="TRANSLATION FACTOR GUF1-RELATED"/>
    <property type="match status" value="1"/>
</dbReference>
<dbReference type="Pfam" id="PF00679">
    <property type="entry name" value="EFG_C"/>
    <property type="match status" value="1"/>
</dbReference>
<dbReference type="Pfam" id="PF00009">
    <property type="entry name" value="GTP_EFTU"/>
    <property type="match status" value="1"/>
</dbReference>
<dbReference type="Pfam" id="PF03144">
    <property type="entry name" value="GTP_EFTU_D2"/>
    <property type="match status" value="1"/>
</dbReference>
<dbReference type="Pfam" id="PF06421">
    <property type="entry name" value="LepA_C"/>
    <property type="match status" value="1"/>
</dbReference>
<dbReference type="PRINTS" id="PR00315">
    <property type="entry name" value="ELONGATNFCT"/>
</dbReference>
<dbReference type="SMART" id="SM00838">
    <property type="entry name" value="EFG_C"/>
    <property type="match status" value="1"/>
</dbReference>
<dbReference type="SUPFAM" id="SSF54980">
    <property type="entry name" value="EF-G C-terminal domain-like"/>
    <property type="match status" value="2"/>
</dbReference>
<dbReference type="SUPFAM" id="SSF52540">
    <property type="entry name" value="P-loop containing nucleoside triphosphate hydrolases"/>
    <property type="match status" value="1"/>
</dbReference>
<dbReference type="SUPFAM" id="SSF50447">
    <property type="entry name" value="Translation proteins"/>
    <property type="match status" value="1"/>
</dbReference>
<dbReference type="PROSITE" id="PS00301">
    <property type="entry name" value="G_TR_1"/>
    <property type="match status" value="1"/>
</dbReference>
<dbReference type="PROSITE" id="PS51722">
    <property type="entry name" value="G_TR_2"/>
    <property type="match status" value="1"/>
</dbReference>
<sequence>MDNEQRLKRRENIRNFSIIAHIDHGKSTLADRILENTKSVETRDMQDQLLDSMDLERERGITIKLNAVRLKYEAKDGNTYTFHLIDTPGHVDFTYEVSRSLAACEGAILVVDAAQGIEAQTLANVYLALDNELELLPVINKIDLPAAEPERVKQEIEDMIGLDQDDVVLASAKSNIGIEEILEKIVEVVPAPDGDPEAPLKALIFDSEYDPYRGVISSIRIVDGVVKAGDKIRMMATGKEFEVTEVGINTPKQLPVDELTVGDVGYIIASIKNVDDSRVGDTITLASRPASEPLQGYKKMNPMVYCGLFPIDNKNYNDLREALEKLQLNDASLEFEPESSQALGFGYRTGFLGMLHMEIIQERIEREFGIELIATAPSVIYQCILRDGSEVTVDNPAQMPDRDKIDKIFEPYVRATMMVPNDYVGAVMELCQRKRGQFINMDYLDDIRVNIVYELPLAEVVFDFFDQLKSNTKGYASFDYEFIENKESNLVKMDILLNGDKVDALSFIVHRDFAYERGKALVEKLKTLIPRQQFEVPVQAAIGQKIVARTNIKSMGKNVLAKCYGGDISRKRKLLEKQKAGKAKMKAVGNVEIPQDAFLAVLKMDDE</sequence>
<proteinExistence type="inferred from homology"/>
<name>LEPA_STAAR</name>
<accession>Q6GGB6</accession>
<feature type="chain" id="PRO_0000176343" description="Elongation factor 4">
    <location>
        <begin position="1"/>
        <end position="607"/>
    </location>
</feature>
<feature type="domain" description="tr-type G">
    <location>
        <begin position="11"/>
        <end position="193"/>
    </location>
</feature>
<feature type="binding site" evidence="1">
    <location>
        <begin position="23"/>
        <end position="28"/>
    </location>
    <ligand>
        <name>GTP</name>
        <dbReference type="ChEBI" id="CHEBI:37565"/>
    </ligand>
</feature>
<feature type="binding site" evidence="1">
    <location>
        <begin position="140"/>
        <end position="143"/>
    </location>
    <ligand>
        <name>GTP</name>
        <dbReference type="ChEBI" id="CHEBI:37565"/>
    </ligand>
</feature>
<comment type="function">
    <text evidence="1">Required for accurate and efficient protein synthesis under certain stress conditions. May act as a fidelity factor of the translation reaction, by catalyzing a one-codon backward translocation of tRNAs on improperly translocated ribosomes. Back-translocation proceeds from a post-translocation (POST) complex to a pre-translocation (PRE) complex, thus giving elongation factor G a second chance to translocate the tRNAs correctly. Binds to ribosomes in a GTP-dependent manner.</text>
</comment>
<comment type="catalytic activity">
    <reaction evidence="1">
        <text>GTP + H2O = GDP + phosphate + H(+)</text>
        <dbReference type="Rhea" id="RHEA:19669"/>
        <dbReference type="ChEBI" id="CHEBI:15377"/>
        <dbReference type="ChEBI" id="CHEBI:15378"/>
        <dbReference type="ChEBI" id="CHEBI:37565"/>
        <dbReference type="ChEBI" id="CHEBI:43474"/>
        <dbReference type="ChEBI" id="CHEBI:58189"/>
        <dbReference type="EC" id="3.6.5.n1"/>
    </reaction>
</comment>
<comment type="subcellular location">
    <subcellularLocation>
        <location evidence="1">Cell membrane</location>
        <topology evidence="1">Peripheral membrane protein</topology>
        <orientation evidence="1">Cytoplasmic side</orientation>
    </subcellularLocation>
</comment>
<comment type="similarity">
    <text evidence="1">Belongs to the TRAFAC class translation factor GTPase superfamily. Classic translation factor GTPase family. LepA subfamily.</text>
</comment>
<evidence type="ECO:0000255" key="1">
    <source>
        <dbReference type="HAMAP-Rule" id="MF_00071"/>
    </source>
</evidence>
<organism>
    <name type="scientific">Staphylococcus aureus (strain MRSA252)</name>
    <dbReference type="NCBI Taxonomy" id="282458"/>
    <lineage>
        <taxon>Bacteria</taxon>
        <taxon>Bacillati</taxon>
        <taxon>Bacillota</taxon>
        <taxon>Bacilli</taxon>
        <taxon>Bacillales</taxon>
        <taxon>Staphylococcaceae</taxon>
        <taxon>Staphylococcus</taxon>
    </lineage>
</organism>
<reference key="1">
    <citation type="journal article" date="2004" name="Proc. Natl. Acad. Sci. U.S.A.">
        <title>Complete genomes of two clinical Staphylococcus aureus strains: evidence for the rapid evolution of virulence and drug resistance.</title>
        <authorList>
            <person name="Holden M.T.G."/>
            <person name="Feil E.J."/>
            <person name="Lindsay J.A."/>
            <person name="Peacock S.J."/>
            <person name="Day N.P.J."/>
            <person name="Enright M.C."/>
            <person name="Foster T.J."/>
            <person name="Moore C.E."/>
            <person name="Hurst L."/>
            <person name="Atkin R."/>
            <person name="Barron A."/>
            <person name="Bason N."/>
            <person name="Bentley S.D."/>
            <person name="Chillingworth C."/>
            <person name="Chillingworth T."/>
            <person name="Churcher C."/>
            <person name="Clark L."/>
            <person name="Corton C."/>
            <person name="Cronin A."/>
            <person name="Doggett J."/>
            <person name="Dowd L."/>
            <person name="Feltwell T."/>
            <person name="Hance Z."/>
            <person name="Harris B."/>
            <person name="Hauser H."/>
            <person name="Holroyd S."/>
            <person name="Jagels K."/>
            <person name="James K.D."/>
            <person name="Lennard N."/>
            <person name="Line A."/>
            <person name="Mayes R."/>
            <person name="Moule S."/>
            <person name="Mungall K."/>
            <person name="Ormond D."/>
            <person name="Quail M.A."/>
            <person name="Rabbinowitsch E."/>
            <person name="Rutherford K.M."/>
            <person name="Sanders M."/>
            <person name="Sharp S."/>
            <person name="Simmonds M."/>
            <person name="Stevens K."/>
            <person name="Whitehead S."/>
            <person name="Barrell B.G."/>
            <person name="Spratt B.G."/>
            <person name="Parkhill J."/>
        </authorList>
    </citation>
    <scope>NUCLEOTIDE SEQUENCE [LARGE SCALE GENOMIC DNA]</scope>
    <source>
        <strain>MRSA252</strain>
    </source>
</reference>
<protein>
    <recommendedName>
        <fullName evidence="1">Elongation factor 4</fullName>
        <shortName evidence="1">EF-4</shortName>
        <ecNumber evidence="1">3.6.5.n1</ecNumber>
    </recommendedName>
    <alternativeName>
        <fullName evidence="1">Ribosomal back-translocase LepA</fullName>
    </alternativeName>
</protein>
<keyword id="KW-1003">Cell membrane</keyword>
<keyword id="KW-0342">GTP-binding</keyword>
<keyword id="KW-0378">Hydrolase</keyword>
<keyword id="KW-0472">Membrane</keyword>
<keyword id="KW-0547">Nucleotide-binding</keyword>
<keyword id="KW-0648">Protein biosynthesis</keyword>
<gene>
    <name evidence="1" type="primary">lepA</name>
    <name type="ordered locus">SAR1662</name>
</gene>